<keyword id="KW-0997">Cell inner membrane</keyword>
<keyword id="KW-1003">Cell membrane</keyword>
<keyword id="KW-0285">Flavoprotein</keyword>
<keyword id="KW-0288">FMN</keyword>
<keyword id="KW-0472">Membrane</keyword>
<keyword id="KW-0520">NAD</keyword>
<keyword id="KW-0560">Oxidoreductase</keyword>
<proteinExistence type="inferred from homology"/>
<protein>
    <recommendedName>
        <fullName evidence="1">Glutathione-regulated potassium-efflux system ancillary protein KefF</fullName>
    </recommendedName>
    <alternativeName>
        <fullName evidence="1">Quinone oxidoreductase KefF</fullName>
        <ecNumber evidence="1">1.6.5.2</ecNumber>
    </alternativeName>
</protein>
<reference key="1">
    <citation type="journal article" date="2009" name="PLoS Genet.">
        <title>Organised genome dynamics in the Escherichia coli species results in highly diverse adaptive paths.</title>
        <authorList>
            <person name="Touchon M."/>
            <person name="Hoede C."/>
            <person name="Tenaillon O."/>
            <person name="Barbe V."/>
            <person name="Baeriswyl S."/>
            <person name="Bidet P."/>
            <person name="Bingen E."/>
            <person name="Bonacorsi S."/>
            <person name="Bouchier C."/>
            <person name="Bouvet O."/>
            <person name="Calteau A."/>
            <person name="Chiapello H."/>
            <person name="Clermont O."/>
            <person name="Cruveiller S."/>
            <person name="Danchin A."/>
            <person name="Diard M."/>
            <person name="Dossat C."/>
            <person name="Karoui M.E."/>
            <person name="Frapy E."/>
            <person name="Garry L."/>
            <person name="Ghigo J.M."/>
            <person name="Gilles A.M."/>
            <person name="Johnson J."/>
            <person name="Le Bouguenec C."/>
            <person name="Lescat M."/>
            <person name="Mangenot S."/>
            <person name="Martinez-Jehanne V."/>
            <person name="Matic I."/>
            <person name="Nassif X."/>
            <person name="Oztas S."/>
            <person name="Petit M.A."/>
            <person name="Pichon C."/>
            <person name="Rouy Z."/>
            <person name="Ruf C.S."/>
            <person name="Schneider D."/>
            <person name="Tourret J."/>
            <person name="Vacherie B."/>
            <person name="Vallenet D."/>
            <person name="Medigue C."/>
            <person name="Rocha E.P.C."/>
            <person name="Denamur E."/>
        </authorList>
    </citation>
    <scope>NUCLEOTIDE SEQUENCE [LARGE SCALE GENOMIC DNA]</scope>
    <source>
        <strain>IAI39 / ExPEC</strain>
    </source>
</reference>
<organism>
    <name type="scientific">Escherichia coli O7:K1 (strain IAI39 / ExPEC)</name>
    <dbReference type="NCBI Taxonomy" id="585057"/>
    <lineage>
        <taxon>Bacteria</taxon>
        <taxon>Pseudomonadati</taxon>
        <taxon>Pseudomonadota</taxon>
        <taxon>Gammaproteobacteria</taxon>
        <taxon>Enterobacterales</taxon>
        <taxon>Enterobacteriaceae</taxon>
        <taxon>Escherichia</taxon>
    </lineage>
</organism>
<dbReference type="EC" id="1.6.5.2" evidence="1"/>
<dbReference type="EMBL" id="CU928164">
    <property type="protein sequence ID" value="CAR16188.1"/>
    <property type="molecule type" value="Genomic_DNA"/>
</dbReference>
<dbReference type="RefSeq" id="WP_000600725.1">
    <property type="nucleotide sequence ID" value="NC_011750.1"/>
</dbReference>
<dbReference type="RefSeq" id="YP_002406095.1">
    <property type="nucleotide sequence ID" value="NC_011750.1"/>
</dbReference>
<dbReference type="SMR" id="B7NHF0"/>
<dbReference type="STRING" id="585057.ECIAI39_0047"/>
<dbReference type="GeneID" id="89519427"/>
<dbReference type="KEGG" id="ect:ECIAI39_0047"/>
<dbReference type="PATRIC" id="fig|585057.6.peg.51"/>
<dbReference type="HOGENOM" id="CLU_058643_0_2_6"/>
<dbReference type="Proteomes" id="UP000000749">
    <property type="component" value="Chromosome"/>
</dbReference>
<dbReference type="GO" id="GO:0005886">
    <property type="term" value="C:plasma membrane"/>
    <property type="evidence" value="ECO:0007669"/>
    <property type="project" value="UniProtKB-SubCell"/>
</dbReference>
<dbReference type="GO" id="GO:0009055">
    <property type="term" value="F:electron transfer activity"/>
    <property type="evidence" value="ECO:0007669"/>
    <property type="project" value="TreeGrafter"/>
</dbReference>
<dbReference type="GO" id="GO:0010181">
    <property type="term" value="F:FMN binding"/>
    <property type="evidence" value="ECO:0007669"/>
    <property type="project" value="UniProtKB-UniRule"/>
</dbReference>
<dbReference type="GO" id="GO:0050136">
    <property type="term" value="F:NADH:ubiquinone reductase (non-electrogenic) activity"/>
    <property type="evidence" value="ECO:0007669"/>
    <property type="project" value="RHEA"/>
</dbReference>
<dbReference type="GO" id="GO:0008753">
    <property type="term" value="F:NADPH dehydrogenase (quinone) activity"/>
    <property type="evidence" value="ECO:0007669"/>
    <property type="project" value="RHEA"/>
</dbReference>
<dbReference type="GO" id="GO:1901381">
    <property type="term" value="P:positive regulation of potassium ion transmembrane transport"/>
    <property type="evidence" value="ECO:0007669"/>
    <property type="project" value="UniProtKB-UniRule"/>
</dbReference>
<dbReference type="GO" id="GO:0006813">
    <property type="term" value="P:potassium ion transport"/>
    <property type="evidence" value="ECO:0007669"/>
    <property type="project" value="InterPro"/>
</dbReference>
<dbReference type="FunFam" id="3.40.50.360:FF:000008">
    <property type="entry name" value="Glutathione-regulated potassium-efflux system ancillary protein KefF"/>
    <property type="match status" value="1"/>
</dbReference>
<dbReference type="Gene3D" id="3.40.50.360">
    <property type="match status" value="1"/>
</dbReference>
<dbReference type="HAMAP" id="MF_01414">
    <property type="entry name" value="K_H_efflux_KefF"/>
    <property type="match status" value="1"/>
</dbReference>
<dbReference type="InterPro" id="IPR003680">
    <property type="entry name" value="Flavodoxin_fold"/>
</dbReference>
<dbReference type="InterPro" id="IPR029039">
    <property type="entry name" value="Flavoprotein-like_sf"/>
</dbReference>
<dbReference type="InterPro" id="IPR023948">
    <property type="entry name" value="K_H_efflux_KefF"/>
</dbReference>
<dbReference type="InterPro" id="IPR046980">
    <property type="entry name" value="KefG/KefF"/>
</dbReference>
<dbReference type="NCBIfam" id="NF002044">
    <property type="entry name" value="PRK00871.1"/>
    <property type="match status" value="1"/>
</dbReference>
<dbReference type="PANTHER" id="PTHR47307:SF2">
    <property type="entry name" value="GLUTATHIONE-REGULATED POTASSIUM-EFFLUX SYSTEM ANCILLARY PROTEIN KEFF"/>
    <property type="match status" value="1"/>
</dbReference>
<dbReference type="PANTHER" id="PTHR47307">
    <property type="entry name" value="GLUTATHIONE-REGULATED POTASSIUM-EFFLUX SYSTEM ANCILLARY PROTEIN KEFG"/>
    <property type="match status" value="1"/>
</dbReference>
<dbReference type="Pfam" id="PF02525">
    <property type="entry name" value="Flavodoxin_2"/>
    <property type="match status" value="1"/>
</dbReference>
<dbReference type="SUPFAM" id="SSF52218">
    <property type="entry name" value="Flavoproteins"/>
    <property type="match status" value="1"/>
</dbReference>
<gene>
    <name evidence="1" type="primary">kefF</name>
    <name type="ordered locus">ECIAI39_0047</name>
</gene>
<evidence type="ECO:0000255" key="1">
    <source>
        <dbReference type="HAMAP-Rule" id="MF_01414"/>
    </source>
</evidence>
<feature type="chain" id="PRO_1000145555" description="Glutathione-regulated potassium-efflux system ancillary protein KefF">
    <location>
        <begin position="1"/>
        <end position="176"/>
    </location>
</feature>
<feature type="binding site" evidence="1">
    <location>
        <position position="8"/>
    </location>
    <ligand>
        <name>FMN</name>
        <dbReference type="ChEBI" id="CHEBI:58210"/>
    </ligand>
</feature>
<feature type="binding site" evidence="1">
    <location>
        <begin position="14"/>
        <end position="17"/>
    </location>
    <ligand>
        <name>FMN</name>
        <dbReference type="ChEBI" id="CHEBI:58210"/>
    </ligand>
</feature>
<feature type="binding site" evidence="1">
    <location>
        <begin position="65"/>
        <end position="68"/>
    </location>
    <ligand>
        <name>FMN</name>
        <dbReference type="ChEBI" id="CHEBI:58210"/>
    </ligand>
</feature>
<feature type="binding site" evidence="1">
    <location>
        <begin position="105"/>
        <end position="108"/>
    </location>
    <ligand>
        <name>FMN</name>
        <dbReference type="ChEBI" id="CHEBI:58210"/>
    </ligand>
</feature>
<comment type="function">
    <text evidence="1">Regulatory subunit of a potassium efflux system that confers protection against electrophiles. Required for full activity of KefC. Shows redox enzymatic activity, but this enzymatic activity is not required for activation of KefC.</text>
</comment>
<comment type="catalytic activity">
    <reaction evidence="1">
        <text>a quinone + NADH + H(+) = a quinol + NAD(+)</text>
        <dbReference type="Rhea" id="RHEA:46160"/>
        <dbReference type="ChEBI" id="CHEBI:15378"/>
        <dbReference type="ChEBI" id="CHEBI:24646"/>
        <dbReference type="ChEBI" id="CHEBI:57540"/>
        <dbReference type="ChEBI" id="CHEBI:57945"/>
        <dbReference type="ChEBI" id="CHEBI:132124"/>
        <dbReference type="EC" id="1.6.5.2"/>
    </reaction>
</comment>
<comment type="catalytic activity">
    <reaction evidence="1">
        <text>a quinone + NADPH + H(+) = a quinol + NADP(+)</text>
        <dbReference type="Rhea" id="RHEA:46164"/>
        <dbReference type="ChEBI" id="CHEBI:15378"/>
        <dbReference type="ChEBI" id="CHEBI:24646"/>
        <dbReference type="ChEBI" id="CHEBI:57783"/>
        <dbReference type="ChEBI" id="CHEBI:58349"/>
        <dbReference type="ChEBI" id="CHEBI:132124"/>
        <dbReference type="EC" id="1.6.5.2"/>
    </reaction>
</comment>
<comment type="cofactor">
    <cofactor evidence="1">
        <name>FMN</name>
        <dbReference type="ChEBI" id="CHEBI:58210"/>
    </cofactor>
</comment>
<comment type="subunit">
    <text evidence="1">Homodimer. Interacts with KefC.</text>
</comment>
<comment type="subcellular location">
    <subcellularLocation>
        <location evidence="1">Cell inner membrane</location>
        <topology evidence="1">Peripheral membrane protein</topology>
        <orientation evidence="1">Cytoplasmic side</orientation>
    </subcellularLocation>
</comment>
<comment type="similarity">
    <text evidence="1">Belongs to the NAD(P)H dehydrogenase (quinone) family. KefF subfamily.</text>
</comment>
<name>KEFF_ECO7I</name>
<accession>B7NHF0</accession>
<sequence length="176" mass="20170">MILIIYAHPYPHHSHANKRMLEQARTLEGVEIRSLYQLYPDFNIDIAAEQEALSRADLIVWQHPMQWYSIPPLLKLWIDKVFSHGWAYGHGGTALHGKHLLWAVTTGGGESHFEIGAHPGFDVLSQPLQATAIYCGLNWLPPFAMHCTFICDDETLEGQARHYKQRLLEWQEAHHG</sequence>